<keyword id="KW-1185">Reference proteome</keyword>
<keyword id="KW-0677">Repeat</keyword>
<keyword id="KW-0804">Transcription</keyword>
<keyword id="KW-0805">Transcription regulation</keyword>
<keyword id="KW-0833">Ubl conjugation pathway</keyword>
<keyword id="KW-0853">WD repeat</keyword>
<protein>
    <recommendedName>
        <fullName>Probable E3 ubiquitin ligase complex SCF subunit sconB</fullName>
    </recommendedName>
    <alternativeName>
        <fullName>Sulfur controller B</fullName>
    </alternativeName>
    <alternativeName>
        <fullName>Sulfur metabolite repression control protein B</fullName>
    </alternativeName>
</protein>
<feature type="chain" id="PRO_0000397249" description="Probable E3 ubiquitin ligase complex SCF subunit sconB">
    <location>
        <begin position="1"/>
        <end position="670"/>
    </location>
</feature>
<feature type="domain" description="F-box" evidence="2">
    <location>
        <begin position="163"/>
        <end position="209"/>
    </location>
</feature>
<feature type="repeat" description="WD 1">
    <location>
        <begin position="339"/>
        <end position="376"/>
    </location>
</feature>
<feature type="repeat" description="WD 2">
    <location>
        <begin position="379"/>
        <end position="418"/>
    </location>
</feature>
<feature type="repeat" description="WD 3">
    <location>
        <begin position="420"/>
        <end position="456"/>
    </location>
</feature>
<feature type="repeat" description="WD 4">
    <location>
        <begin position="458"/>
        <end position="499"/>
    </location>
</feature>
<feature type="repeat" description="WD 5">
    <location>
        <begin position="553"/>
        <end position="596"/>
    </location>
</feature>
<feature type="repeat" description="WD 6">
    <location>
        <begin position="599"/>
        <end position="636"/>
    </location>
</feature>
<feature type="repeat" description="WD 7">
    <location>
        <begin position="639"/>
        <end position="670"/>
    </location>
</feature>
<feature type="region of interest" description="Disordered" evidence="3">
    <location>
        <begin position="1"/>
        <end position="38"/>
    </location>
</feature>
<feature type="region of interest" description="Disordered" evidence="3">
    <location>
        <begin position="249"/>
        <end position="287"/>
    </location>
</feature>
<feature type="compositionally biased region" description="Polar residues" evidence="3">
    <location>
        <begin position="27"/>
        <end position="38"/>
    </location>
</feature>
<dbReference type="EMBL" id="AM270009">
    <property type="protein sequence ID" value="CAK47657.1"/>
    <property type="molecule type" value="Genomic_DNA"/>
</dbReference>
<dbReference type="RefSeq" id="XP_001399618.2">
    <property type="nucleotide sequence ID" value="XM_001399581.2"/>
</dbReference>
<dbReference type="SMR" id="A2QCU8"/>
<dbReference type="EnsemblFungi" id="CAK47657">
    <property type="protein sequence ID" value="CAK47657"/>
    <property type="gene ID" value="An02g04800"/>
</dbReference>
<dbReference type="GeneID" id="4978969"/>
<dbReference type="KEGG" id="ang:An02g04800"/>
<dbReference type="HOGENOM" id="CLU_000288_103_1_1"/>
<dbReference type="UniPathway" id="UPA00143"/>
<dbReference type="Proteomes" id="UP000006706">
    <property type="component" value="Chromosome 4R"/>
</dbReference>
<dbReference type="GO" id="GO:0016567">
    <property type="term" value="P:protein ubiquitination"/>
    <property type="evidence" value="ECO:0007669"/>
    <property type="project" value="UniProtKB-UniPathway"/>
</dbReference>
<dbReference type="CDD" id="cd22147">
    <property type="entry name" value="F-box_SpPof1-like"/>
    <property type="match status" value="1"/>
</dbReference>
<dbReference type="CDD" id="cd00200">
    <property type="entry name" value="WD40"/>
    <property type="match status" value="1"/>
</dbReference>
<dbReference type="FunFam" id="1.20.1280.50:FF:000016">
    <property type="entry name" value="E3 ubiquitin ligase complex SCF subunit sconB"/>
    <property type="match status" value="1"/>
</dbReference>
<dbReference type="FunFam" id="2.130.10.10:FF:000770">
    <property type="entry name" value="E3 ubiquitin ligase complex SCF subunit sconB"/>
    <property type="match status" value="1"/>
</dbReference>
<dbReference type="FunFam" id="2.130.10.10:FF:000890">
    <property type="entry name" value="Probable E3 ubiquitin ligase complex SCF subunit sconB"/>
    <property type="match status" value="1"/>
</dbReference>
<dbReference type="Gene3D" id="1.20.1280.50">
    <property type="match status" value="1"/>
</dbReference>
<dbReference type="Gene3D" id="2.130.10.10">
    <property type="entry name" value="YVTN repeat-like/Quinoprotein amine dehydrogenase"/>
    <property type="match status" value="2"/>
</dbReference>
<dbReference type="InterPro" id="IPR036047">
    <property type="entry name" value="F-box-like_dom_sf"/>
</dbReference>
<dbReference type="InterPro" id="IPR001810">
    <property type="entry name" value="F-box_dom"/>
</dbReference>
<dbReference type="InterPro" id="IPR020472">
    <property type="entry name" value="G-protein_beta_WD-40_rep"/>
</dbReference>
<dbReference type="InterPro" id="IPR051075">
    <property type="entry name" value="SCF_subunit_WD-repeat"/>
</dbReference>
<dbReference type="InterPro" id="IPR015943">
    <property type="entry name" value="WD40/YVTN_repeat-like_dom_sf"/>
</dbReference>
<dbReference type="InterPro" id="IPR019775">
    <property type="entry name" value="WD40_repeat_CS"/>
</dbReference>
<dbReference type="InterPro" id="IPR036322">
    <property type="entry name" value="WD40_repeat_dom_sf"/>
</dbReference>
<dbReference type="InterPro" id="IPR001680">
    <property type="entry name" value="WD40_rpt"/>
</dbReference>
<dbReference type="PANTHER" id="PTHR19872">
    <property type="entry name" value="UBIQUITIN LIGASE SPECIFICITY FACTOR/HREP PROTEIN"/>
    <property type="match status" value="1"/>
</dbReference>
<dbReference type="PANTHER" id="PTHR19872:SF9">
    <property type="entry name" value="UBIQUITIN-BINDING SDF UBIQUITIN LIGASE COMPLEX SUBUNIT"/>
    <property type="match status" value="1"/>
</dbReference>
<dbReference type="Pfam" id="PF12937">
    <property type="entry name" value="F-box-like"/>
    <property type="match status" value="1"/>
</dbReference>
<dbReference type="Pfam" id="PF00400">
    <property type="entry name" value="WD40"/>
    <property type="match status" value="6"/>
</dbReference>
<dbReference type="PRINTS" id="PR00320">
    <property type="entry name" value="GPROTEINBRPT"/>
</dbReference>
<dbReference type="SMART" id="SM00256">
    <property type="entry name" value="FBOX"/>
    <property type="match status" value="1"/>
</dbReference>
<dbReference type="SMART" id="SM00320">
    <property type="entry name" value="WD40"/>
    <property type="match status" value="7"/>
</dbReference>
<dbReference type="SUPFAM" id="SSF81383">
    <property type="entry name" value="F-box domain"/>
    <property type="match status" value="1"/>
</dbReference>
<dbReference type="SUPFAM" id="SSF50978">
    <property type="entry name" value="WD40 repeat-like"/>
    <property type="match status" value="1"/>
</dbReference>
<dbReference type="PROSITE" id="PS50181">
    <property type="entry name" value="FBOX"/>
    <property type="match status" value="1"/>
</dbReference>
<dbReference type="PROSITE" id="PS00678">
    <property type="entry name" value="WD_REPEATS_1"/>
    <property type="match status" value="4"/>
</dbReference>
<dbReference type="PROSITE" id="PS50082">
    <property type="entry name" value="WD_REPEATS_2"/>
    <property type="match status" value="7"/>
</dbReference>
<dbReference type="PROSITE" id="PS50294">
    <property type="entry name" value="WD_REPEATS_REGION"/>
    <property type="match status" value="1"/>
</dbReference>
<name>SCONB_ASPNC</name>
<sequence>MSSPPPFTSIFGGPAESAEEIDADADNSQLKPHNRSNVTATSAKLVGKSVAPFLAKHVPDQYAPLGSQNREPAALSSANSRYCYRHRPDRKCRRQADEPTMDKLQRELESLPQSDQQGIAHVWSLFSAAPAKHRKLILQGIMAQCCFPQLSFISTTVRDLIRIDFIAALPPEISFKILCYLDTTSLCKAAQVSRRWRALADDDVVWHRMCEQHIHRKCKKCGWGLPLLDRKRLRESKREIEIRATTWDVNGTSPKATPALPEDASPVADSSGTGKRKPEPSEEETAVVKRHCQSLAMRPEGSEDYFKTRYRPWKEVYKDRFKVGTNWKYGRCSIRIFKGHTNGVMCLQFEDNILATGSYDATIKIWDTDTGQEIRTLRGHESGIRCLQFDDTKLISGSMDGSVKVWNWRTGDCISTYTGHRGGVIGLHFDATILASASVDKTVKIWNFEDKSTCLLRGHTDWVNAVRVDTASRTVFSASDDCTVRLWDLDTKSCIRTFHGHVGQVQQVVPLPREFEFEEHDVECENDNLSTVSGDTEPASLQATLGLESNAVISQSSPFGPSFESGRTAPPRYIVTSALDSTIRLWETSTGRCLRTFFGHLEGVWALAADTLRIVSGAEDRMIKIWDPRTGKCERTFTGHSGPVTCIGLGDSRFATGSEDCEVRMYSFQS</sequence>
<organism>
    <name type="scientific">Aspergillus niger (strain ATCC MYA-4892 / CBS 513.88 / FGSC A1513)</name>
    <dbReference type="NCBI Taxonomy" id="425011"/>
    <lineage>
        <taxon>Eukaryota</taxon>
        <taxon>Fungi</taxon>
        <taxon>Dikarya</taxon>
        <taxon>Ascomycota</taxon>
        <taxon>Pezizomycotina</taxon>
        <taxon>Eurotiomycetes</taxon>
        <taxon>Eurotiomycetidae</taxon>
        <taxon>Eurotiales</taxon>
        <taxon>Aspergillaceae</taxon>
        <taxon>Aspergillus</taxon>
        <taxon>Aspergillus subgen. Circumdati</taxon>
    </lineage>
</organism>
<reference key="1">
    <citation type="journal article" date="2007" name="Nat. Biotechnol.">
        <title>Genome sequencing and analysis of the versatile cell factory Aspergillus niger CBS 513.88.</title>
        <authorList>
            <person name="Pel H.J."/>
            <person name="de Winde J.H."/>
            <person name="Archer D.B."/>
            <person name="Dyer P.S."/>
            <person name="Hofmann G."/>
            <person name="Schaap P.J."/>
            <person name="Turner G."/>
            <person name="de Vries R.P."/>
            <person name="Albang R."/>
            <person name="Albermann K."/>
            <person name="Andersen M.R."/>
            <person name="Bendtsen J.D."/>
            <person name="Benen J.A.E."/>
            <person name="van den Berg M."/>
            <person name="Breestraat S."/>
            <person name="Caddick M.X."/>
            <person name="Contreras R."/>
            <person name="Cornell M."/>
            <person name="Coutinho P.M."/>
            <person name="Danchin E.G.J."/>
            <person name="Debets A.J.M."/>
            <person name="Dekker P."/>
            <person name="van Dijck P.W.M."/>
            <person name="van Dijk A."/>
            <person name="Dijkhuizen L."/>
            <person name="Driessen A.J.M."/>
            <person name="d'Enfert C."/>
            <person name="Geysens S."/>
            <person name="Goosen C."/>
            <person name="Groot G.S.P."/>
            <person name="de Groot P.W.J."/>
            <person name="Guillemette T."/>
            <person name="Henrissat B."/>
            <person name="Herweijer M."/>
            <person name="van den Hombergh J.P.T.W."/>
            <person name="van den Hondel C.A.M.J.J."/>
            <person name="van der Heijden R.T.J.M."/>
            <person name="van der Kaaij R.M."/>
            <person name="Klis F.M."/>
            <person name="Kools H.J."/>
            <person name="Kubicek C.P."/>
            <person name="van Kuyk P.A."/>
            <person name="Lauber J."/>
            <person name="Lu X."/>
            <person name="van der Maarel M.J.E.C."/>
            <person name="Meulenberg R."/>
            <person name="Menke H."/>
            <person name="Mortimer M.A."/>
            <person name="Nielsen J."/>
            <person name="Oliver S.G."/>
            <person name="Olsthoorn M."/>
            <person name="Pal K."/>
            <person name="van Peij N.N.M.E."/>
            <person name="Ram A.F.J."/>
            <person name="Rinas U."/>
            <person name="Roubos J.A."/>
            <person name="Sagt C.M.J."/>
            <person name="Schmoll M."/>
            <person name="Sun J."/>
            <person name="Ussery D."/>
            <person name="Varga J."/>
            <person name="Vervecken W."/>
            <person name="van de Vondervoort P.J.J."/>
            <person name="Wedler H."/>
            <person name="Woesten H.A.B."/>
            <person name="Zeng A.-P."/>
            <person name="van Ooyen A.J.J."/>
            <person name="Visser J."/>
            <person name="Stam H."/>
        </authorList>
    </citation>
    <scope>NUCLEOTIDE SEQUENCE [LARGE SCALE GENOMIC DNA]</scope>
    <source>
        <strain>ATCC MYA-4892 / CBS 513.88 / FGSC A1513</strain>
    </source>
</reference>
<comment type="function">
    <text evidence="1">Component of the SCF(sconB) E3 ubiquitin ligase complex involved in the regulation of sulfur metabolite repression, probably by mediating the inactivation or degradation of the metR transcription factor.</text>
</comment>
<comment type="pathway">
    <text>Protein modification; protein ubiquitination.</text>
</comment>
<comment type="subunit">
    <text evidence="1">Component of the SCF(sconB) E3 ubiquitin ligase complex.</text>
</comment>
<comment type="similarity">
    <text evidence="4">Belongs to the WD repeat MET30/SCONB/SCON-2 family.</text>
</comment>
<proteinExistence type="inferred from homology"/>
<evidence type="ECO:0000250" key="1"/>
<evidence type="ECO:0000255" key="2">
    <source>
        <dbReference type="PROSITE-ProRule" id="PRU00080"/>
    </source>
</evidence>
<evidence type="ECO:0000256" key="3">
    <source>
        <dbReference type="SAM" id="MobiDB-lite"/>
    </source>
</evidence>
<evidence type="ECO:0000305" key="4"/>
<gene>
    <name type="primary">sconB</name>
    <name type="ORF">An02g04800</name>
</gene>
<accession>A2QCU8</accession>